<dbReference type="EMBL" id="AC133673">
    <property type="status" value="NOT_ANNOTATED_CDS"/>
    <property type="molecule type" value="Genomic_DNA"/>
</dbReference>
<dbReference type="RefSeq" id="NP_001386702.1">
    <property type="nucleotide sequence ID" value="NM_001399773.1"/>
</dbReference>
<dbReference type="RefSeq" id="XP_006241965.1">
    <property type="nucleotide sequence ID" value="XM_006241903.2"/>
</dbReference>
<dbReference type="SMR" id="D3ZNT6"/>
<dbReference type="FunCoup" id="D3ZNT6">
    <property type="interactions" value="18"/>
</dbReference>
<dbReference type="STRING" id="10116.ENSRNOP00000010084"/>
<dbReference type="PhosphoSitePlus" id="D3ZNT6"/>
<dbReference type="PaxDb" id="10116-ENSRNOP00000010084"/>
<dbReference type="Ensembl" id="ENSRNOT00000010084.3">
    <property type="protein sequence ID" value="ENSRNOP00000010084.2"/>
    <property type="gene ID" value="ENSRNOG00000007668.3"/>
</dbReference>
<dbReference type="GeneID" id="366949"/>
<dbReference type="UCSC" id="RGD:1562627">
    <property type="organism name" value="rat"/>
</dbReference>
<dbReference type="AGR" id="RGD:1562627"/>
<dbReference type="RGD" id="1562627">
    <property type="gene designation" value="Mafa"/>
</dbReference>
<dbReference type="eggNOG" id="KOG4196">
    <property type="taxonomic scope" value="Eukaryota"/>
</dbReference>
<dbReference type="GeneTree" id="ENSGT00940000162747"/>
<dbReference type="HOGENOM" id="CLU_063062_0_0_1"/>
<dbReference type="InParanoid" id="D3ZNT6"/>
<dbReference type="OMA" id="SYQHHLN"/>
<dbReference type="PhylomeDB" id="D3ZNT6"/>
<dbReference type="TreeFam" id="TF325689"/>
<dbReference type="PRO" id="PR:D3ZNT6"/>
<dbReference type="Proteomes" id="UP000002494">
    <property type="component" value="Chromosome 7"/>
</dbReference>
<dbReference type="Bgee" id="ENSRNOG00000007668">
    <property type="expression patterns" value="Expressed in quadriceps femoris and 8 other cell types or tissues"/>
</dbReference>
<dbReference type="GO" id="GO:0005634">
    <property type="term" value="C:nucleus"/>
    <property type="evidence" value="ECO:0000266"/>
    <property type="project" value="RGD"/>
</dbReference>
<dbReference type="GO" id="GO:0003677">
    <property type="term" value="F:DNA binding"/>
    <property type="evidence" value="ECO:0000266"/>
    <property type="project" value="RGD"/>
</dbReference>
<dbReference type="GO" id="GO:0001228">
    <property type="term" value="F:DNA-binding transcription activator activity, RNA polymerase II-specific"/>
    <property type="evidence" value="ECO:0000266"/>
    <property type="project" value="RGD"/>
</dbReference>
<dbReference type="GO" id="GO:0003700">
    <property type="term" value="F:DNA-binding transcription factor activity"/>
    <property type="evidence" value="ECO:0000266"/>
    <property type="project" value="RGD"/>
</dbReference>
<dbReference type="GO" id="GO:0000981">
    <property type="term" value="F:DNA-binding transcription factor activity, RNA polymerase II-specific"/>
    <property type="evidence" value="ECO:0000318"/>
    <property type="project" value="GO_Central"/>
</dbReference>
<dbReference type="GO" id="GO:0000978">
    <property type="term" value="F:RNA polymerase II cis-regulatory region sequence-specific DNA binding"/>
    <property type="evidence" value="ECO:0000266"/>
    <property type="project" value="RGD"/>
</dbReference>
<dbReference type="GO" id="GO:1990837">
    <property type="term" value="F:sequence-specific double-stranded DNA binding"/>
    <property type="evidence" value="ECO:0000266"/>
    <property type="project" value="RGD"/>
</dbReference>
<dbReference type="GO" id="GO:0030073">
    <property type="term" value="P:insulin secretion"/>
    <property type="evidence" value="ECO:0000266"/>
    <property type="project" value="RGD"/>
</dbReference>
<dbReference type="GO" id="GO:0045893">
    <property type="term" value="P:positive regulation of DNA-templated transcription"/>
    <property type="evidence" value="ECO:0000266"/>
    <property type="project" value="RGD"/>
</dbReference>
<dbReference type="GO" id="GO:0045944">
    <property type="term" value="P:positive regulation of transcription by RNA polymerase II"/>
    <property type="evidence" value="ECO:0000266"/>
    <property type="project" value="RGD"/>
</dbReference>
<dbReference type="GO" id="GO:0006357">
    <property type="term" value="P:regulation of transcription by RNA polymerase II"/>
    <property type="evidence" value="ECO:0000318"/>
    <property type="project" value="GO_Central"/>
</dbReference>
<dbReference type="GO" id="GO:0009749">
    <property type="term" value="P:response to glucose"/>
    <property type="evidence" value="ECO:0000266"/>
    <property type="project" value="RGD"/>
</dbReference>
<dbReference type="CDD" id="cd14718">
    <property type="entry name" value="bZIP_Maf_large"/>
    <property type="match status" value="1"/>
</dbReference>
<dbReference type="FunFam" id="1.20.5.170:FF:000016">
    <property type="entry name" value="MAF bZIP transcription factor"/>
    <property type="match status" value="1"/>
</dbReference>
<dbReference type="Gene3D" id="1.20.5.170">
    <property type="match status" value="1"/>
</dbReference>
<dbReference type="InterPro" id="IPR004827">
    <property type="entry name" value="bZIP"/>
</dbReference>
<dbReference type="InterPro" id="IPR004826">
    <property type="entry name" value="bZIP_Maf"/>
</dbReference>
<dbReference type="InterPro" id="IPR046347">
    <property type="entry name" value="bZIP_sf"/>
</dbReference>
<dbReference type="InterPro" id="IPR013592">
    <property type="entry name" value="Maf_TF_N"/>
</dbReference>
<dbReference type="InterPro" id="IPR008917">
    <property type="entry name" value="TF_DNA-bd_sf"/>
</dbReference>
<dbReference type="InterPro" id="IPR024874">
    <property type="entry name" value="Transcription_factor_Maf_fam"/>
</dbReference>
<dbReference type="PANTHER" id="PTHR10129">
    <property type="entry name" value="TRANSCRIPTION FACTOR MAF"/>
    <property type="match status" value="1"/>
</dbReference>
<dbReference type="PANTHER" id="PTHR10129:SF30">
    <property type="entry name" value="TRANSCRIPTION FACTOR MAFA"/>
    <property type="match status" value="1"/>
</dbReference>
<dbReference type="Pfam" id="PF03131">
    <property type="entry name" value="bZIP_Maf"/>
    <property type="match status" value="1"/>
</dbReference>
<dbReference type="Pfam" id="PF08383">
    <property type="entry name" value="Maf_N"/>
    <property type="match status" value="1"/>
</dbReference>
<dbReference type="SMART" id="SM00338">
    <property type="entry name" value="BRLZ"/>
    <property type="match status" value="1"/>
</dbReference>
<dbReference type="SUPFAM" id="SSF47454">
    <property type="entry name" value="A DNA-binding domain in eukaryotic transcription factors"/>
    <property type="match status" value="1"/>
</dbReference>
<dbReference type="SUPFAM" id="SSF57959">
    <property type="entry name" value="Leucine zipper domain"/>
    <property type="match status" value="1"/>
</dbReference>
<dbReference type="PROSITE" id="PS50217">
    <property type="entry name" value="BZIP"/>
    <property type="match status" value="1"/>
</dbReference>
<evidence type="ECO:0000250" key="1">
    <source>
        <dbReference type="UniProtKB" id="O57342"/>
    </source>
</evidence>
<evidence type="ECO:0000250" key="2">
    <source>
        <dbReference type="UniProtKB" id="Q8CF90"/>
    </source>
</evidence>
<evidence type="ECO:0000250" key="3">
    <source>
        <dbReference type="UniProtKB" id="Q8NHW3"/>
    </source>
</evidence>
<evidence type="ECO:0000255" key="4"/>
<evidence type="ECO:0000255" key="5">
    <source>
        <dbReference type="PROSITE-ProRule" id="PRU00978"/>
    </source>
</evidence>
<evidence type="ECO:0000256" key="6">
    <source>
        <dbReference type="SAM" id="MobiDB-lite"/>
    </source>
</evidence>
<evidence type="ECO:0000269" key="7">
    <source>
    </source>
</evidence>
<gene>
    <name type="primary">Mafa</name>
</gene>
<comment type="function">
    <text evidence="2 3 7">Transcription factor that activates insulin gene expression (PubMed:15665000). Acts synergistically with NEUROD1/BETA2 and PDX1 (By similarity). Binds the insulin enhancer C1/RIPE3b element (PubMed:15665000). Binds to consensus TRE-type MARE 5'-TGCTGACTCAGCA-3' DNA sequence (By similarity).</text>
</comment>
<comment type="subunit">
    <text evidence="1 2 3">Forms homodimers. Monomers and dimers are able to bind DNA, but the off-rate is faster for monomers (By similarity). Interacts with NEUROD1 and PDX1 (By similarity). May interact with MAFB, FOS, JUN and PCAF (By similarity).</text>
</comment>
<comment type="subcellular location">
    <subcellularLocation>
        <location evidence="7">Nucleus</location>
    </subcellularLocation>
</comment>
<comment type="induction">
    <text evidence="7">Up-regulated by glucose in Langerhans islets (at protein level).</text>
</comment>
<comment type="PTM">
    <text evidence="1">Ubiquitinated, leading to its degradation by the proteasome.</text>
</comment>
<comment type="PTM">
    <text evidence="2">Phosphorylated at tyrosines.</text>
</comment>
<comment type="similarity">
    <text evidence="4">Belongs to the bZIP family.</text>
</comment>
<reference key="1">
    <citation type="journal article" date="2004" name="Nature">
        <title>Genome sequence of the Brown Norway rat yields insights into mammalian evolution.</title>
        <authorList>
            <person name="Gibbs R.A."/>
            <person name="Weinstock G.M."/>
            <person name="Metzker M.L."/>
            <person name="Muzny D.M."/>
            <person name="Sodergren E.J."/>
            <person name="Scherer S."/>
            <person name="Scott G."/>
            <person name="Steffen D."/>
            <person name="Worley K.C."/>
            <person name="Burch P.E."/>
            <person name="Okwuonu G."/>
            <person name="Hines S."/>
            <person name="Lewis L."/>
            <person name="Deramo C."/>
            <person name="Delgado O."/>
            <person name="Dugan-Rocha S."/>
            <person name="Miner G."/>
            <person name="Morgan M."/>
            <person name="Hawes A."/>
            <person name="Gill R."/>
            <person name="Holt R.A."/>
            <person name="Adams M.D."/>
            <person name="Amanatides P.G."/>
            <person name="Baden-Tillson H."/>
            <person name="Barnstead M."/>
            <person name="Chin S."/>
            <person name="Evans C.A."/>
            <person name="Ferriera S."/>
            <person name="Fosler C."/>
            <person name="Glodek A."/>
            <person name="Gu Z."/>
            <person name="Jennings D."/>
            <person name="Kraft C.L."/>
            <person name="Nguyen T."/>
            <person name="Pfannkoch C.M."/>
            <person name="Sitter C."/>
            <person name="Sutton G.G."/>
            <person name="Venter J.C."/>
            <person name="Woodage T."/>
            <person name="Smith D."/>
            <person name="Lee H.-M."/>
            <person name="Gustafson E."/>
            <person name="Cahill P."/>
            <person name="Kana A."/>
            <person name="Doucette-Stamm L."/>
            <person name="Weinstock K."/>
            <person name="Fechtel K."/>
            <person name="Weiss R.B."/>
            <person name="Dunn D.M."/>
            <person name="Green E.D."/>
            <person name="Blakesley R.W."/>
            <person name="Bouffard G.G."/>
            <person name="De Jong P.J."/>
            <person name="Osoegawa K."/>
            <person name="Zhu B."/>
            <person name="Marra M."/>
            <person name="Schein J."/>
            <person name="Bosdet I."/>
            <person name="Fjell C."/>
            <person name="Jones S."/>
            <person name="Krzywinski M."/>
            <person name="Mathewson C."/>
            <person name="Siddiqui A."/>
            <person name="Wye N."/>
            <person name="McPherson J."/>
            <person name="Zhao S."/>
            <person name="Fraser C.M."/>
            <person name="Shetty J."/>
            <person name="Shatsman S."/>
            <person name="Geer K."/>
            <person name="Chen Y."/>
            <person name="Abramzon S."/>
            <person name="Nierman W.C."/>
            <person name="Havlak P.H."/>
            <person name="Chen R."/>
            <person name="Durbin K.J."/>
            <person name="Egan A."/>
            <person name="Ren Y."/>
            <person name="Song X.-Z."/>
            <person name="Li B."/>
            <person name="Liu Y."/>
            <person name="Qin X."/>
            <person name="Cawley S."/>
            <person name="Cooney A.J."/>
            <person name="D'Souza L.M."/>
            <person name="Martin K."/>
            <person name="Wu J.Q."/>
            <person name="Gonzalez-Garay M.L."/>
            <person name="Jackson A.R."/>
            <person name="Kalafus K.J."/>
            <person name="McLeod M.P."/>
            <person name="Milosavljevic A."/>
            <person name="Virk D."/>
            <person name="Volkov A."/>
            <person name="Wheeler D.A."/>
            <person name="Zhang Z."/>
            <person name="Bailey J.A."/>
            <person name="Eichler E.E."/>
            <person name="Tuzun E."/>
            <person name="Birney E."/>
            <person name="Mongin E."/>
            <person name="Ureta-Vidal A."/>
            <person name="Woodwark C."/>
            <person name="Zdobnov E."/>
            <person name="Bork P."/>
            <person name="Suyama M."/>
            <person name="Torrents D."/>
            <person name="Alexandersson M."/>
            <person name="Trask B.J."/>
            <person name="Young J.M."/>
            <person name="Huang H."/>
            <person name="Wang H."/>
            <person name="Xing H."/>
            <person name="Daniels S."/>
            <person name="Gietzen D."/>
            <person name="Schmidt J."/>
            <person name="Stevens K."/>
            <person name="Vitt U."/>
            <person name="Wingrove J."/>
            <person name="Camara F."/>
            <person name="Mar Alba M."/>
            <person name="Abril J.F."/>
            <person name="Guigo R."/>
            <person name="Smit A."/>
            <person name="Dubchak I."/>
            <person name="Rubin E.M."/>
            <person name="Couronne O."/>
            <person name="Poliakov A."/>
            <person name="Huebner N."/>
            <person name="Ganten D."/>
            <person name="Goesele C."/>
            <person name="Hummel O."/>
            <person name="Kreitler T."/>
            <person name="Lee Y.-A."/>
            <person name="Monti J."/>
            <person name="Schulz H."/>
            <person name="Zimdahl H."/>
            <person name="Himmelbauer H."/>
            <person name="Lehrach H."/>
            <person name="Jacob H.J."/>
            <person name="Bromberg S."/>
            <person name="Gullings-Handley J."/>
            <person name="Jensen-Seaman M.I."/>
            <person name="Kwitek A.E."/>
            <person name="Lazar J."/>
            <person name="Pasko D."/>
            <person name="Tonellato P.J."/>
            <person name="Twigger S."/>
            <person name="Ponting C.P."/>
            <person name="Duarte J.M."/>
            <person name="Rice S."/>
            <person name="Goodstadt L."/>
            <person name="Beatson S.A."/>
            <person name="Emes R.D."/>
            <person name="Winter E.E."/>
            <person name="Webber C."/>
            <person name="Brandt P."/>
            <person name="Nyakatura G."/>
            <person name="Adetobi M."/>
            <person name="Chiaromonte F."/>
            <person name="Elnitski L."/>
            <person name="Eswara P."/>
            <person name="Hardison R.C."/>
            <person name="Hou M."/>
            <person name="Kolbe D."/>
            <person name="Makova K."/>
            <person name="Miller W."/>
            <person name="Nekrutenko A."/>
            <person name="Riemer C."/>
            <person name="Schwartz S."/>
            <person name="Taylor J."/>
            <person name="Yang S."/>
            <person name="Zhang Y."/>
            <person name="Lindpaintner K."/>
            <person name="Andrews T.D."/>
            <person name="Caccamo M."/>
            <person name="Clamp M."/>
            <person name="Clarke L."/>
            <person name="Curwen V."/>
            <person name="Durbin R.M."/>
            <person name="Eyras E."/>
            <person name="Searle S.M."/>
            <person name="Cooper G.M."/>
            <person name="Batzoglou S."/>
            <person name="Brudno M."/>
            <person name="Sidow A."/>
            <person name="Stone E.A."/>
            <person name="Payseur B.A."/>
            <person name="Bourque G."/>
            <person name="Lopez-Otin C."/>
            <person name="Puente X.S."/>
            <person name="Chakrabarti K."/>
            <person name="Chatterji S."/>
            <person name="Dewey C."/>
            <person name="Pachter L."/>
            <person name="Bray N."/>
            <person name="Yap V.B."/>
            <person name="Caspi A."/>
            <person name="Tesler G."/>
            <person name="Pevzner P.A."/>
            <person name="Haussler D."/>
            <person name="Roskin K.M."/>
            <person name="Baertsch R."/>
            <person name="Clawson H."/>
            <person name="Furey T.S."/>
            <person name="Hinrichs A.S."/>
            <person name="Karolchik D."/>
            <person name="Kent W.J."/>
            <person name="Rosenbloom K.R."/>
            <person name="Trumbower H."/>
            <person name="Weirauch M."/>
            <person name="Cooper D.N."/>
            <person name="Stenson P.D."/>
            <person name="Ma B."/>
            <person name="Brent M."/>
            <person name="Arumugam M."/>
            <person name="Shteynberg D."/>
            <person name="Copley R.R."/>
            <person name="Taylor M.S."/>
            <person name="Riethman H."/>
            <person name="Mudunuri U."/>
            <person name="Peterson J."/>
            <person name="Guyer M."/>
            <person name="Felsenfeld A."/>
            <person name="Old S."/>
            <person name="Mockrin S."/>
            <person name="Collins F.S."/>
        </authorList>
    </citation>
    <scope>NUCLEOTIDE SEQUENCE [LARGE SCALE GENOMIC DNA]</scope>
    <source>
        <strain>Brown Norway</strain>
    </source>
</reference>
<reference key="2">
    <citation type="journal article" date="2005" name="J. Biol. Chem.">
        <title>The islet beta cell-enriched MafA activator is a key regulator of insulin gene transcription.</title>
        <authorList>
            <person name="Zhao L."/>
            <person name="Guo M."/>
            <person name="Matsuoka T.A."/>
            <person name="Hagman D.K."/>
            <person name="Parazzoli S.D."/>
            <person name="Poitout V."/>
            <person name="Stein R."/>
        </authorList>
    </citation>
    <scope>FUNCTION</scope>
    <scope>SUBCELLULAR LOCATION</scope>
    <scope>INDUCTION BY GLUCOSE</scope>
</reference>
<reference key="3">
    <citation type="journal article" date="2007" name="Mol. Cell">
        <title>GSK-3-mediated phosphorylation enhances Maf-transforming activity.</title>
        <authorList>
            <person name="Rocques N."/>
            <person name="Abou Zeid N."/>
            <person name="Sii-Felice K."/>
            <person name="Lecoin L."/>
            <person name="Felder-Schmittbuhl M.-P."/>
            <person name="Eychene A."/>
            <person name="Pouponnot C."/>
        </authorList>
    </citation>
    <scope>PHOSPHORYLATION BY GSK3</scope>
</reference>
<name>MAFA_RAT</name>
<feature type="chain" id="PRO_0000445278" description="Transcription factor MafA">
    <location>
        <begin position="1"/>
        <end position="361"/>
    </location>
</feature>
<feature type="domain" description="bZIP" evidence="5">
    <location>
        <begin position="262"/>
        <end position="325"/>
    </location>
</feature>
<feature type="region of interest" description="Disordered" evidence="6">
    <location>
        <begin position="40"/>
        <end position="105"/>
    </location>
</feature>
<feature type="region of interest" description="Disordered" evidence="6">
    <location>
        <begin position="175"/>
        <end position="228"/>
    </location>
</feature>
<feature type="region of interest" description="Basic motif" evidence="5">
    <location>
        <begin position="262"/>
        <end position="287"/>
    </location>
</feature>
<feature type="region of interest" description="Leucine-zipper" evidence="5">
    <location>
        <begin position="290"/>
        <end position="311"/>
    </location>
</feature>
<feature type="region of interest" description="Disordered" evidence="6">
    <location>
        <begin position="324"/>
        <end position="361"/>
    </location>
</feature>
<feature type="compositionally biased region" description="Low complexity" evidence="6">
    <location>
        <begin position="46"/>
        <end position="76"/>
    </location>
</feature>
<feature type="compositionally biased region" description="Basic residues" evidence="6">
    <location>
        <begin position="183"/>
        <end position="211"/>
    </location>
</feature>
<feature type="compositionally biased region" description="Gly residues" evidence="6">
    <location>
        <begin position="212"/>
        <end position="226"/>
    </location>
</feature>
<feature type="compositionally biased region" description="Gly residues" evidence="6">
    <location>
        <begin position="327"/>
        <end position="338"/>
    </location>
</feature>
<feature type="compositionally biased region" description="Low complexity" evidence="6">
    <location>
        <begin position="345"/>
        <end position="361"/>
    </location>
</feature>
<feature type="modified residue" description="Phosphoserine" evidence="1">
    <location>
        <position position="14"/>
    </location>
</feature>
<feature type="modified residue" description="Phosphoserine" evidence="1">
    <location>
        <position position="49"/>
    </location>
</feature>
<feature type="modified residue" description="Phosphothreonine" evidence="1">
    <location>
        <position position="53"/>
    </location>
</feature>
<feature type="modified residue" description="Phosphothreonine" evidence="1">
    <location>
        <position position="57"/>
    </location>
</feature>
<feature type="modified residue" description="Phosphoserine" evidence="1">
    <location>
        <position position="61"/>
    </location>
</feature>
<feature type="modified residue" description="Phosphoserine" evidence="1">
    <location>
        <position position="65"/>
    </location>
</feature>
<feature type="cross-link" description="Glycyl lysine isopeptide (Lys-Gly) (interchain with G-Cter in SUMO2)" evidence="3">
    <location>
        <position position="32"/>
    </location>
</feature>
<accession>D3ZNT6</accession>
<protein>
    <recommendedName>
        <fullName>Transcription factor MafA</fullName>
    </recommendedName>
    <alternativeName>
        <fullName>Pancreatic beta-cell-specific transcriptional activator</fullName>
    </alternativeName>
</protein>
<organism>
    <name type="scientific">Rattus norvegicus</name>
    <name type="common">Rat</name>
    <dbReference type="NCBI Taxonomy" id="10116"/>
    <lineage>
        <taxon>Eukaryota</taxon>
        <taxon>Metazoa</taxon>
        <taxon>Chordata</taxon>
        <taxon>Craniata</taxon>
        <taxon>Vertebrata</taxon>
        <taxon>Euteleostomi</taxon>
        <taxon>Mammalia</taxon>
        <taxon>Eutheria</taxon>
        <taxon>Euarchontoglires</taxon>
        <taxon>Glires</taxon>
        <taxon>Rodentia</taxon>
        <taxon>Myomorpha</taxon>
        <taxon>Muroidea</taxon>
        <taxon>Muridae</taxon>
        <taxon>Murinae</taxon>
        <taxon>Rattus</taxon>
    </lineage>
</organism>
<sequence length="361" mass="37780">MAAELAMGAELPSSPLAIEYVNDFDLMKFEVKKEPPEAERFCHRLPPGSLSSTPLSTPCSSVPSSPSFCAPSPGTGSSAGGGGSAAQAGGAPGPPSGGPGTVGGASGKAVLEDLYWMSGYQHHLNPEALNLTPEDAVEALIGSGHHSAHHGAHHPAAAAAYEAFRGQSFAGGGGGGADDMGAGHHHGAHHTAHHHHSAHHHHHHHHHHGGSGHHGGGAGHGGGGAGHHVRLEERFSDDQLVSMSVRELNRQLRGFSKEEVIRLKQKRRTLKNRGYAQSCRFKRVQQRHILESEKCQLQSQVEQLKLEVGRLAKERDLYKEKYEKLAGRGGPGGAGGAGFPREPSPAQAGPGAAKGAPDFFL</sequence>
<keyword id="KW-0010">Activator</keyword>
<keyword id="KW-0238">DNA-binding</keyword>
<keyword id="KW-1017">Isopeptide bond</keyword>
<keyword id="KW-0539">Nucleus</keyword>
<keyword id="KW-0597">Phosphoprotein</keyword>
<keyword id="KW-1185">Reference proteome</keyword>
<keyword id="KW-0804">Transcription</keyword>
<keyword id="KW-0805">Transcription regulation</keyword>
<keyword id="KW-0832">Ubl conjugation</keyword>
<proteinExistence type="evidence at protein level"/>